<comment type="function">
    <text evidence="1">Part of a membrane-bound complex that couples electron transfer with translocation of ions across the membrane.</text>
</comment>
<comment type="cofactor">
    <cofactor evidence="1">
        <name>[4Fe-4S] cluster</name>
        <dbReference type="ChEBI" id="CHEBI:49883"/>
    </cofactor>
    <text evidence="1">Binds 3 [4Fe-4S] clusters.</text>
</comment>
<comment type="subunit">
    <text evidence="1">The complex is composed of six subunits: RnfA, RnfB, RnfC, RnfD, RnfE and RnfG.</text>
</comment>
<comment type="subcellular location">
    <subcellularLocation>
        <location evidence="1">Cell inner membrane</location>
    </subcellularLocation>
</comment>
<comment type="similarity">
    <text evidence="1">Belongs to the 4Fe4S bacterial-type ferredoxin family. RnfB subfamily.</text>
</comment>
<feature type="chain" id="PRO_1000013664" description="Ion-translocating oxidoreductase complex subunit B">
    <location>
        <begin position="1"/>
        <end position="194"/>
    </location>
</feature>
<feature type="domain" description="4Fe-4S" evidence="1">
    <location>
        <begin position="32"/>
        <end position="90"/>
    </location>
</feature>
<feature type="domain" description="4Fe-4S ferredoxin-type 1" evidence="1">
    <location>
        <begin position="105"/>
        <end position="134"/>
    </location>
</feature>
<feature type="domain" description="4Fe-4S ferredoxin-type 2" evidence="1">
    <location>
        <begin position="135"/>
        <end position="164"/>
    </location>
</feature>
<feature type="region of interest" description="Hydrophobic" evidence="1">
    <location>
        <begin position="1"/>
        <end position="26"/>
    </location>
</feature>
<feature type="binding site" evidence="1">
    <location>
        <position position="49"/>
    </location>
    <ligand>
        <name>[4Fe-4S] cluster</name>
        <dbReference type="ChEBI" id="CHEBI:49883"/>
        <label>1</label>
    </ligand>
</feature>
<feature type="binding site" evidence="1">
    <location>
        <position position="52"/>
    </location>
    <ligand>
        <name>[4Fe-4S] cluster</name>
        <dbReference type="ChEBI" id="CHEBI:49883"/>
        <label>1</label>
    </ligand>
</feature>
<feature type="binding site" evidence="1">
    <location>
        <position position="57"/>
    </location>
    <ligand>
        <name>[4Fe-4S] cluster</name>
        <dbReference type="ChEBI" id="CHEBI:49883"/>
        <label>1</label>
    </ligand>
</feature>
<feature type="binding site" evidence="1">
    <location>
        <position position="73"/>
    </location>
    <ligand>
        <name>[4Fe-4S] cluster</name>
        <dbReference type="ChEBI" id="CHEBI:49883"/>
        <label>1</label>
    </ligand>
</feature>
<feature type="binding site" evidence="1">
    <location>
        <position position="114"/>
    </location>
    <ligand>
        <name>[4Fe-4S] cluster</name>
        <dbReference type="ChEBI" id="CHEBI:49883"/>
        <label>2</label>
    </ligand>
</feature>
<feature type="binding site" evidence="1">
    <location>
        <position position="117"/>
    </location>
    <ligand>
        <name>[4Fe-4S] cluster</name>
        <dbReference type="ChEBI" id="CHEBI:49883"/>
        <label>2</label>
    </ligand>
</feature>
<feature type="binding site" evidence="1">
    <location>
        <position position="120"/>
    </location>
    <ligand>
        <name>[4Fe-4S] cluster</name>
        <dbReference type="ChEBI" id="CHEBI:49883"/>
        <label>2</label>
    </ligand>
</feature>
<feature type="binding site" evidence="1">
    <location>
        <position position="124"/>
    </location>
    <ligand>
        <name>[4Fe-4S] cluster</name>
        <dbReference type="ChEBI" id="CHEBI:49883"/>
        <label>3</label>
    </ligand>
</feature>
<feature type="binding site" evidence="1">
    <location>
        <position position="144"/>
    </location>
    <ligand>
        <name>[4Fe-4S] cluster</name>
        <dbReference type="ChEBI" id="CHEBI:49883"/>
        <label>3</label>
    </ligand>
</feature>
<feature type="binding site" evidence="1">
    <location>
        <position position="147"/>
    </location>
    <ligand>
        <name>[4Fe-4S] cluster</name>
        <dbReference type="ChEBI" id="CHEBI:49883"/>
        <label>3</label>
    </ligand>
</feature>
<feature type="binding site" evidence="1">
    <location>
        <position position="150"/>
    </location>
    <ligand>
        <name>[4Fe-4S] cluster</name>
        <dbReference type="ChEBI" id="CHEBI:49883"/>
        <label>3</label>
    </ligand>
</feature>
<feature type="binding site" evidence="1">
    <location>
        <position position="154"/>
    </location>
    <ligand>
        <name>[4Fe-4S] cluster</name>
        <dbReference type="ChEBI" id="CHEBI:49883"/>
        <label>2</label>
    </ligand>
</feature>
<name>RNFB_ALIF1</name>
<accession>Q5E6B7</accession>
<proteinExistence type="inferred from homology"/>
<gene>
    <name evidence="1" type="primary">rnfB</name>
    <name type="ordered locus">VF_0934</name>
</gene>
<reference key="1">
    <citation type="journal article" date="2005" name="Proc. Natl. Acad. Sci. U.S.A.">
        <title>Complete genome sequence of Vibrio fischeri: a symbiotic bacterium with pathogenic congeners.</title>
        <authorList>
            <person name="Ruby E.G."/>
            <person name="Urbanowski M."/>
            <person name="Campbell J."/>
            <person name="Dunn A."/>
            <person name="Faini M."/>
            <person name="Gunsalus R."/>
            <person name="Lostroh P."/>
            <person name="Lupp C."/>
            <person name="McCann J."/>
            <person name="Millikan D."/>
            <person name="Schaefer A."/>
            <person name="Stabb E."/>
            <person name="Stevens A."/>
            <person name="Visick K."/>
            <person name="Whistler C."/>
            <person name="Greenberg E.P."/>
        </authorList>
    </citation>
    <scope>NUCLEOTIDE SEQUENCE [LARGE SCALE GENOMIC DNA]</scope>
    <source>
        <strain>ATCC 700601 / ES114</strain>
    </source>
</reference>
<protein>
    <recommendedName>
        <fullName evidence="1">Ion-translocating oxidoreductase complex subunit B</fullName>
        <ecNumber evidence="1">7.-.-.-</ecNumber>
    </recommendedName>
    <alternativeName>
        <fullName evidence="1">Rnf electron transport complex subunit B</fullName>
    </alternativeName>
</protein>
<organism>
    <name type="scientific">Aliivibrio fischeri (strain ATCC 700601 / ES114)</name>
    <name type="common">Vibrio fischeri</name>
    <dbReference type="NCBI Taxonomy" id="312309"/>
    <lineage>
        <taxon>Bacteria</taxon>
        <taxon>Pseudomonadati</taxon>
        <taxon>Pseudomonadota</taxon>
        <taxon>Gammaproteobacteria</taxon>
        <taxon>Vibrionales</taxon>
        <taxon>Vibrionaceae</taxon>
        <taxon>Aliivibrio</taxon>
    </lineage>
</organism>
<dbReference type="EC" id="7.-.-.-" evidence="1"/>
<dbReference type="EMBL" id="CP000020">
    <property type="protein sequence ID" value="AAW85429.1"/>
    <property type="molecule type" value="Genomic_DNA"/>
</dbReference>
<dbReference type="RefSeq" id="YP_204317.1">
    <property type="nucleotide sequence ID" value="NC_006840.2"/>
</dbReference>
<dbReference type="STRING" id="312309.VF_0934"/>
<dbReference type="EnsemblBacteria" id="AAW85429">
    <property type="protein sequence ID" value="AAW85429"/>
    <property type="gene ID" value="VF_0934"/>
</dbReference>
<dbReference type="GeneID" id="54163602"/>
<dbReference type="KEGG" id="vfi:VF_0934"/>
<dbReference type="PATRIC" id="fig|312309.11.peg.932"/>
<dbReference type="eggNOG" id="COG2878">
    <property type="taxonomic scope" value="Bacteria"/>
</dbReference>
<dbReference type="HOGENOM" id="CLU_063448_2_0_6"/>
<dbReference type="OrthoDB" id="9789936at2"/>
<dbReference type="Proteomes" id="UP000000537">
    <property type="component" value="Chromosome I"/>
</dbReference>
<dbReference type="GO" id="GO:0005886">
    <property type="term" value="C:plasma membrane"/>
    <property type="evidence" value="ECO:0007669"/>
    <property type="project" value="UniProtKB-SubCell"/>
</dbReference>
<dbReference type="GO" id="GO:0051539">
    <property type="term" value="F:4 iron, 4 sulfur cluster binding"/>
    <property type="evidence" value="ECO:0007669"/>
    <property type="project" value="UniProtKB-UniRule"/>
</dbReference>
<dbReference type="GO" id="GO:0009055">
    <property type="term" value="F:electron transfer activity"/>
    <property type="evidence" value="ECO:0007669"/>
    <property type="project" value="InterPro"/>
</dbReference>
<dbReference type="GO" id="GO:0046872">
    <property type="term" value="F:metal ion binding"/>
    <property type="evidence" value="ECO:0007669"/>
    <property type="project" value="UniProtKB-KW"/>
</dbReference>
<dbReference type="GO" id="GO:0022900">
    <property type="term" value="P:electron transport chain"/>
    <property type="evidence" value="ECO:0007669"/>
    <property type="project" value="UniProtKB-UniRule"/>
</dbReference>
<dbReference type="FunFam" id="1.10.15.40:FF:000001">
    <property type="entry name" value="Ion-translocating oxidoreductase complex subunit B"/>
    <property type="match status" value="1"/>
</dbReference>
<dbReference type="Gene3D" id="3.30.70.20">
    <property type="match status" value="2"/>
</dbReference>
<dbReference type="Gene3D" id="1.10.15.40">
    <property type="entry name" value="Electron transport complex subunit B, putative Fe-S cluster"/>
    <property type="match status" value="1"/>
</dbReference>
<dbReference type="HAMAP" id="MF_00463">
    <property type="entry name" value="RsxB_RnfB"/>
    <property type="match status" value="1"/>
</dbReference>
<dbReference type="InterPro" id="IPR007202">
    <property type="entry name" value="4Fe-4S_dom"/>
</dbReference>
<dbReference type="InterPro" id="IPR017896">
    <property type="entry name" value="4Fe4S_Fe-S-bd"/>
</dbReference>
<dbReference type="InterPro" id="IPR017900">
    <property type="entry name" value="4Fe4S_Fe_S_CS"/>
</dbReference>
<dbReference type="InterPro" id="IPR010207">
    <property type="entry name" value="Elect_transpt_cplx_RnfB/RsxB"/>
</dbReference>
<dbReference type="InterPro" id="IPR016463">
    <property type="entry name" value="RnfB/RsxB_Proteobac"/>
</dbReference>
<dbReference type="InterPro" id="IPR050294">
    <property type="entry name" value="RnfB_subfamily"/>
</dbReference>
<dbReference type="NCBIfam" id="NF003475">
    <property type="entry name" value="PRK05113.1"/>
    <property type="match status" value="1"/>
</dbReference>
<dbReference type="NCBIfam" id="TIGR01944">
    <property type="entry name" value="rnfB"/>
    <property type="match status" value="1"/>
</dbReference>
<dbReference type="PANTHER" id="PTHR42859:SF3">
    <property type="entry name" value="ION-TRANSLOCATING OXIDOREDUCTASE COMPLEX SUBUNIT B"/>
    <property type="match status" value="1"/>
</dbReference>
<dbReference type="PANTHER" id="PTHR42859">
    <property type="entry name" value="OXIDOREDUCTASE"/>
    <property type="match status" value="1"/>
</dbReference>
<dbReference type="Pfam" id="PF14697">
    <property type="entry name" value="Fer4_21"/>
    <property type="match status" value="1"/>
</dbReference>
<dbReference type="Pfam" id="PF04060">
    <property type="entry name" value="FeS"/>
    <property type="match status" value="1"/>
</dbReference>
<dbReference type="PIRSF" id="PIRSF005784">
    <property type="entry name" value="Elect_transpt_RnfB"/>
    <property type="match status" value="1"/>
</dbReference>
<dbReference type="SUPFAM" id="SSF54862">
    <property type="entry name" value="4Fe-4S ferredoxins"/>
    <property type="match status" value="1"/>
</dbReference>
<dbReference type="PROSITE" id="PS51656">
    <property type="entry name" value="4FE4S"/>
    <property type="match status" value="1"/>
</dbReference>
<dbReference type="PROSITE" id="PS00198">
    <property type="entry name" value="4FE4S_FER_1"/>
    <property type="match status" value="2"/>
</dbReference>
<dbReference type="PROSITE" id="PS51379">
    <property type="entry name" value="4FE4S_FER_2"/>
    <property type="match status" value="2"/>
</dbReference>
<sequence>MSSILIAVIAIAALALVFGLILGFASIKFKVESDPIVEQIDAILPQTQCGQCGYPGCKPYAEAIANGDMINKCPPGGQATIEKLADLMGVDVPSSAHDEEKSIKKVAFIHEDMCIGCTKCIQACPVDAIVGGTKALHTVIESECTGCDLCVAPCPTDCIEMIPVKTTPDNWKWDLNTIPVVNISTDQPSKSSEL</sequence>
<evidence type="ECO:0000255" key="1">
    <source>
        <dbReference type="HAMAP-Rule" id="MF_00463"/>
    </source>
</evidence>
<keyword id="KW-0004">4Fe-4S</keyword>
<keyword id="KW-0997">Cell inner membrane</keyword>
<keyword id="KW-1003">Cell membrane</keyword>
<keyword id="KW-0249">Electron transport</keyword>
<keyword id="KW-0408">Iron</keyword>
<keyword id="KW-0411">Iron-sulfur</keyword>
<keyword id="KW-0472">Membrane</keyword>
<keyword id="KW-0479">Metal-binding</keyword>
<keyword id="KW-1185">Reference proteome</keyword>
<keyword id="KW-0677">Repeat</keyword>
<keyword id="KW-1278">Translocase</keyword>
<keyword id="KW-0813">Transport</keyword>